<name>ANKR9_MOUSE</name>
<dbReference type="EMBL" id="AK032641">
    <property type="protein sequence ID" value="BAC27966.1"/>
    <property type="molecule type" value="mRNA"/>
</dbReference>
<dbReference type="EMBL" id="AK172167">
    <property type="protein sequence ID" value="BAE42861.1"/>
    <property type="molecule type" value="mRNA"/>
</dbReference>
<dbReference type="EMBL" id="BC023687">
    <property type="protein sequence ID" value="AAH23687.1"/>
    <property type="molecule type" value="mRNA"/>
</dbReference>
<dbReference type="CCDS" id="CCDS26174.1"/>
<dbReference type="RefSeq" id="NP_001348845.1">
    <property type="nucleotide sequence ID" value="NM_001361916.2"/>
</dbReference>
<dbReference type="RefSeq" id="NP_001348846.1">
    <property type="nucleotide sequence ID" value="NM_001361917.1"/>
</dbReference>
<dbReference type="RefSeq" id="NP_780416.2">
    <property type="nucleotide sequence ID" value="NM_175207.5"/>
</dbReference>
<dbReference type="RefSeq" id="XP_006516357.1">
    <property type="nucleotide sequence ID" value="XM_006516294.5"/>
</dbReference>
<dbReference type="RefSeq" id="XP_006516358.1">
    <property type="nucleotide sequence ID" value="XM_006516295.2"/>
</dbReference>
<dbReference type="RefSeq" id="XP_030102817.1">
    <property type="nucleotide sequence ID" value="XM_030246957.2"/>
</dbReference>
<dbReference type="RefSeq" id="XP_030102818.1">
    <property type="nucleotide sequence ID" value="XM_030246958.2"/>
</dbReference>
<dbReference type="SMR" id="Q8BH83"/>
<dbReference type="FunCoup" id="Q8BH83">
    <property type="interactions" value="59"/>
</dbReference>
<dbReference type="STRING" id="10090.ENSMUSP00000120816"/>
<dbReference type="iPTMnet" id="Q8BH83"/>
<dbReference type="PhosphoSitePlus" id="Q8BH83"/>
<dbReference type="PaxDb" id="10090-ENSMUSP00000120816"/>
<dbReference type="ProteomicsDB" id="281985"/>
<dbReference type="Pumba" id="Q8BH83"/>
<dbReference type="Antibodypedia" id="27869">
    <property type="antibodies" value="70 antibodies from 16 providers"/>
</dbReference>
<dbReference type="Ensembl" id="ENSMUST00000043459.13">
    <property type="protein sequence ID" value="ENSMUSP00000048823.7"/>
    <property type="gene ID" value="ENSMUSG00000037904.15"/>
</dbReference>
<dbReference type="Ensembl" id="ENSMUST00000128353.8">
    <property type="protein sequence ID" value="ENSMUSP00000120816.2"/>
    <property type="gene ID" value="ENSMUSG00000037904.15"/>
</dbReference>
<dbReference type="Ensembl" id="ENSMUST00000135131.2">
    <property type="protein sequence ID" value="ENSMUSP00000119339.2"/>
    <property type="gene ID" value="ENSMUSG00000037904.15"/>
</dbReference>
<dbReference type="Ensembl" id="ENSMUST00000140788.8">
    <property type="protein sequence ID" value="ENSMUSP00000121279.2"/>
    <property type="gene ID" value="ENSMUSG00000037904.15"/>
</dbReference>
<dbReference type="Ensembl" id="ENSMUST00000148765.2">
    <property type="protein sequence ID" value="ENSMUSP00000123239.2"/>
    <property type="gene ID" value="ENSMUSG00000037904.15"/>
</dbReference>
<dbReference type="GeneID" id="74251"/>
<dbReference type="KEGG" id="mmu:74251"/>
<dbReference type="UCSC" id="uc007pci.1">
    <property type="organism name" value="mouse"/>
</dbReference>
<dbReference type="AGR" id="MGI:1921501"/>
<dbReference type="CTD" id="122416"/>
<dbReference type="MGI" id="MGI:1921501">
    <property type="gene designation" value="Ankrd9"/>
</dbReference>
<dbReference type="VEuPathDB" id="HostDB:ENSMUSG00000037904"/>
<dbReference type="eggNOG" id="KOG0504">
    <property type="taxonomic scope" value="Eukaryota"/>
</dbReference>
<dbReference type="GeneTree" id="ENSGT00390000018116"/>
<dbReference type="HOGENOM" id="CLU_066027_0_0_1"/>
<dbReference type="InParanoid" id="Q8BH83"/>
<dbReference type="OMA" id="ATEAFHW"/>
<dbReference type="PhylomeDB" id="Q8BH83"/>
<dbReference type="TreeFam" id="TF331214"/>
<dbReference type="Reactome" id="R-MMU-8951664">
    <property type="pathway name" value="Neddylation"/>
</dbReference>
<dbReference type="UniPathway" id="UPA00143"/>
<dbReference type="BioGRID-ORCS" id="74251">
    <property type="hits" value="1 hit in 76 CRISPR screens"/>
</dbReference>
<dbReference type="PRO" id="PR:Q8BH83"/>
<dbReference type="Proteomes" id="UP000000589">
    <property type="component" value="Chromosome 12"/>
</dbReference>
<dbReference type="RNAct" id="Q8BH83">
    <property type="molecule type" value="protein"/>
</dbReference>
<dbReference type="Bgee" id="ENSMUSG00000037904">
    <property type="expression patterns" value="Expressed in hindlimb stylopod muscle and 79 other cell types or tissues"/>
</dbReference>
<dbReference type="ExpressionAtlas" id="Q8BH83">
    <property type="expression patterns" value="baseline and differential"/>
</dbReference>
<dbReference type="GO" id="GO:0031466">
    <property type="term" value="C:Cul5-RING ubiquitin ligase complex"/>
    <property type="evidence" value="ECO:0000250"/>
    <property type="project" value="UniProtKB"/>
</dbReference>
<dbReference type="GO" id="GO:0031410">
    <property type="term" value="C:cytoplasmic vesicle"/>
    <property type="evidence" value="ECO:0000250"/>
    <property type="project" value="UniProtKB"/>
</dbReference>
<dbReference type="GO" id="GO:0005829">
    <property type="term" value="C:cytosol"/>
    <property type="evidence" value="ECO:0000250"/>
    <property type="project" value="UniProtKB"/>
</dbReference>
<dbReference type="GO" id="GO:0016787">
    <property type="term" value="F:hydrolase activity"/>
    <property type="evidence" value="ECO:0007669"/>
    <property type="project" value="UniProtKB-KW"/>
</dbReference>
<dbReference type="GO" id="GO:1990756">
    <property type="term" value="F:ubiquitin-like ligase-substrate adaptor activity"/>
    <property type="evidence" value="ECO:0000250"/>
    <property type="project" value="UniProtKB"/>
</dbReference>
<dbReference type="GO" id="GO:0006878">
    <property type="term" value="P:intracellular copper ion homeostasis"/>
    <property type="evidence" value="ECO:0000250"/>
    <property type="project" value="UniProtKB"/>
</dbReference>
<dbReference type="GO" id="GO:0043161">
    <property type="term" value="P:proteasome-mediated ubiquitin-dependent protein catabolic process"/>
    <property type="evidence" value="ECO:0000250"/>
    <property type="project" value="UniProtKB"/>
</dbReference>
<dbReference type="GO" id="GO:0016567">
    <property type="term" value="P:protein ubiquitination"/>
    <property type="evidence" value="ECO:0000250"/>
    <property type="project" value="UniProtKB"/>
</dbReference>
<dbReference type="FunFam" id="1.25.40.20:FF:000226">
    <property type="entry name" value="Ankyrin repeat domain-containing protein 9"/>
    <property type="match status" value="1"/>
</dbReference>
<dbReference type="Gene3D" id="1.25.40.20">
    <property type="entry name" value="Ankyrin repeat-containing domain"/>
    <property type="match status" value="1"/>
</dbReference>
<dbReference type="InterPro" id="IPR002110">
    <property type="entry name" value="Ankyrin_rpt"/>
</dbReference>
<dbReference type="InterPro" id="IPR036770">
    <property type="entry name" value="Ankyrin_rpt-contain_sf"/>
</dbReference>
<dbReference type="InterPro" id="IPR052391">
    <property type="entry name" value="E3_Ligase-Neurotoxin"/>
</dbReference>
<dbReference type="PANTHER" id="PTHR24133">
    <property type="entry name" value="ANKYRIN DOMAIN-CONTAINING"/>
    <property type="match status" value="1"/>
</dbReference>
<dbReference type="PANTHER" id="PTHR24133:SF16">
    <property type="entry name" value="ANKYRIN REPEAT DOMAIN-CONTAINING PROTEIN 9"/>
    <property type="match status" value="1"/>
</dbReference>
<dbReference type="SUPFAM" id="SSF48403">
    <property type="entry name" value="Ankyrin repeat"/>
    <property type="match status" value="1"/>
</dbReference>
<dbReference type="PROSITE" id="PS50297">
    <property type="entry name" value="ANK_REP_REGION"/>
    <property type="match status" value="1"/>
</dbReference>
<dbReference type="PROSITE" id="PS50088">
    <property type="entry name" value="ANK_REPEAT"/>
    <property type="match status" value="1"/>
</dbReference>
<organism>
    <name type="scientific">Mus musculus</name>
    <name type="common">Mouse</name>
    <dbReference type="NCBI Taxonomy" id="10090"/>
    <lineage>
        <taxon>Eukaryota</taxon>
        <taxon>Metazoa</taxon>
        <taxon>Chordata</taxon>
        <taxon>Craniata</taxon>
        <taxon>Vertebrata</taxon>
        <taxon>Euteleostomi</taxon>
        <taxon>Mammalia</taxon>
        <taxon>Eutheria</taxon>
        <taxon>Euarchontoglires</taxon>
        <taxon>Glires</taxon>
        <taxon>Rodentia</taxon>
        <taxon>Myomorpha</taxon>
        <taxon>Muroidea</taxon>
        <taxon>Muridae</taxon>
        <taxon>Murinae</taxon>
        <taxon>Mus</taxon>
        <taxon>Mus</taxon>
    </lineage>
</organism>
<gene>
    <name type="primary">Ankrd9</name>
</gene>
<sequence length="326" mass="35513">MPWDTRPGRSANGGPEGPGAARLRVQKQCRKSSFAFYLAVRDQLPVWLLEDIRASEAFHCDERGRAAAYSPSEALLYALVHDHQAYAHYLLATFPRCALAPPSAGFRCCTAPGPHVALAVRYNRVGILRRILRTVQDFPVEERVRLLDRRGCSRVEGGGTSLHVACELARPECLFLLLGHGASPGLRDGSGFTPLELLLRQLNQDASSAPTKAEAASATVNAATANTTSSEEVCQRRLLLLDLLVLYTPGGVVGPARCELLGDQLRWQRLLGEDKFQWLAGLAPPSLFVRAMQVLVTTISPGRFPEALDELPLPSFLQPLDLTGKG</sequence>
<comment type="function">
    <text evidence="1">Substrate receptor subunit of a cullin-RING superfamily E3 ligase complex (CUL5-based E3 ubiquitin ligase complex) which mediates the ubiquitination and subsequent proteasomal degradation of target proteins. Depending of the metabolic state of the cell, promotes the proteasomal degradation of IMPDH2, the rate-limiting enzyme in GTP biosynthesis or protects IMPDH2 by stabilizing IMPDH2 filaments assembly. Implicated in different cellular processes, like copper homeostasis and cell proliferation.</text>
</comment>
<comment type="pathway">
    <text evidence="1">Protein modification; protein ubiquitination.</text>
</comment>
<comment type="subunit">
    <text evidence="1">Part of an E3 ubiquitin-protein ligase complex with Elongin BC (ELOB and ELOC), CUL5 and ANKRD9. Interacts with IMPDH2; leading to ubiquitination of IMPDH2 and its subsequent proteasomal degradation.</text>
</comment>
<comment type="subcellular location">
    <subcellularLocation>
        <location evidence="1">Cytoplasmic vesicle</location>
    </subcellularLocation>
    <subcellularLocation>
        <location evidence="1">Cytoplasm</location>
        <location evidence="1">Cytosol</location>
    </subcellularLocation>
    <text evidence="1">Detected in long filamentous cytosolic structures where it colocalizes with IMPDH2. Under basal conditions ANKRD9 is mainly in vesicle-like structures, upon nutrient limitation (guanine nucleotides deficiency) ANKRD9 loses its vesicular pattern and assembles with IMPDH2 into rodlike filaments.</text>
</comment>
<keyword id="KW-0040">ANK repeat</keyword>
<keyword id="KW-0963">Cytoplasm</keyword>
<keyword id="KW-0968">Cytoplasmic vesicle</keyword>
<keyword id="KW-0378">Hydrolase</keyword>
<keyword id="KW-1185">Reference proteome</keyword>
<keyword id="KW-0677">Repeat</keyword>
<keyword id="KW-0833">Ubl conjugation pathway</keyword>
<evidence type="ECO:0000250" key="1">
    <source>
        <dbReference type="UniProtKB" id="Q96BM1"/>
    </source>
</evidence>
<evidence type="ECO:0000256" key="2">
    <source>
        <dbReference type="SAM" id="MobiDB-lite"/>
    </source>
</evidence>
<protein>
    <recommendedName>
        <fullName>Ankyrin repeat domain-containing protein 9</fullName>
    </recommendedName>
</protein>
<accession>Q8BH83</accession>
<accession>Q3TA09</accession>
<accession>Q8BHR3</accession>
<feature type="chain" id="PRO_0000066904" description="Ankyrin repeat domain-containing protein 9">
    <location>
        <begin position="1"/>
        <end position="326"/>
    </location>
</feature>
<feature type="repeat" description="ANK 1">
    <location>
        <begin position="70"/>
        <end position="99"/>
    </location>
</feature>
<feature type="repeat" description="ANK 2">
    <location>
        <begin position="111"/>
        <end position="140"/>
    </location>
</feature>
<feature type="repeat" description="ANK 3">
    <location>
        <begin position="157"/>
        <end position="186"/>
    </location>
</feature>
<feature type="region of interest" description="Disordered" evidence="2">
    <location>
        <begin position="1"/>
        <end position="20"/>
    </location>
</feature>
<feature type="short sequence motif" description="Important role in both nutrient sensing and binding/regulation of IMPDH2" evidence="1">
    <location>
        <begin position="108"/>
        <end position="109"/>
    </location>
</feature>
<proteinExistence type="evidence at transcript level"/>
<reference key="1">
    <citation type="journal article" date="2005" name="Science">
        <title>The transcriptional landscape of the mammalian genome.</title>
        <authorList>
            <person name="Carninci P."/>
            <person name="Kasukawa T."/>
            <person name="Katayama S."/>
            <person name="Gough J."/>
            <person name="Frith M.C."/>
            <person name="Maeda N."/>
            <person name="Oyama R."/>
            <person name="Ravasi T."/>
            <person name="Lenhard B."/>
            <person name="Wells C."/>
            <person name="Kodzius R."/>
            <person name="Shimokawa K."/>
            <person name="Bajic V.B."/>
            <person name="Brenner S.E."/>
            <person name="Batalov S."/>
            <person name="Forrest A.R."/>
            <person name="Zavolan M."/>
            <person name="Davis M.J."/>
            <person name="Wilming L.G."/>
            <person name="Aidinis V."/>
            <person name="Allen J.E."/>
            <person name="Ambesi-Impiombato A."/>
            <person name="Apweiler R."/>
            <person name="Aturaliya R.N."/>
            <person name="Bailey T.L."/>
            <person name="Bansal M."/>
            <person name="Baxter L."/>
            <person name="Beisel K.W."/>
            <person name="Bersano T."/>
            <person name="Bono H."/>
            <person name="Chalk A.M."/>
            <person name="Chiu K.P."/>
            <person name="Choudhary V."/>
            <person name="Christoffels A."/>
            <person name="Clutterbuck D.R."/>
            <person name="Crowe M.L."/>
            <person name="Dalla E."/>
            <person name="Dalrymple B.P."/>
            <person name="de Bono B."/>
            <person name="Della Gatta G."/>
            <person name="di Bernardo D."/>
            <person name="Down T."/>
            <person name="Engstrom P."/>
            <person name="Fagiolini M."/>
            <person name="Faulkner G."/>
            <person name="Fletcher C.F."/>
            <person name="Fukushima T."/>
            <person name="Furuno M."/>
            <person name="Futaki S."/>
            <person name="Gariboldi M."/>
            <person name="Georgii-Hemming P."/>
            <person name="Gingeras T.R."/>
            <person name="Gojobori T."/>
            <person name="Green R.E."/>
            <person name="Gustincich S."/>
            <person name="Harbers M."/>
            <person name="Hayashi Y."/>
            <person name="Hensch T.K."/>
            <person name="Hirokawa N."/>
            <person name="Hill D."/>
            <person name="Huminiecki L."/>
            <person name="Iacono M."/>
            <person name="Ikeo K."/>
            <person name="Iwama A."/>
            <person name="Ishikawa T."/>
            <person name="Jakt M."/>
            <person name="Kanapin A."/>
            <person name="Katoh M."/>
            <person name="Kawasawa Y."/>
            <person name="Kelso J."/>
            <person name="Kitamura H."/>
            <person name="Kitano H."/>
            <person name="Kollias G."/>
            <person name="Krishnan S.P."/>
            <person name="Kruger A."/>
            <person name="Kummerfeld S.K."/>
            <person name="Kurochkin I.V."/>
            <person name="Lareau L.F."/>
            <person name="Lazarevic D."/>
            <person name="Lipovich L."/>
            <person name="Liu J."/>
            <person name="Liuni S."/>
            <person name="McWilliam S."/>
            <person name="Madan Babu M."/>
            <person name="Madera M."/>
            <person name="Marchionni L."/>
            <person name="Matsuda H."/>
            <person name="Matsuzawa S."/>
            <person name="Miki H."/>
            <person name="Mignone F."/>
            <person name="Miyake S."/>
            <person name="Morris K."/>
            <person name="Mottagui-Tabar S."/>
            <person name="Mulder N."/>
            <person name="Nakano N."/>
            <person name="Nakauchi H."/>
            <person name="Ng P."/>
            <person name="Nilsson R."/>
            <person name="Nishiguchi S."/>
            <person name="Nishikawa S."/>
            <person name="Nori F."/>
            <person name="Ohara O."/>
            <person name="Okazaki Y."/>
            <person name="Orlando V."/>
            <person name="Pang K.C."/>
            <person name="Pavan W.J."/>
            <person name="Pavesi G."/>
            <person name="Pesole G."/>
            <person name="Petrovsky N."/>
            <person name="Piazza S."/>
            <person name="Reed J."/>
            <person name="Reid J.F."/>
            <person name="Ring B.Z."/>
            <person name="Ringwald M."/>
            <person name="Rost B."/>
            <person name="Ruan Y."/>
            <person name="Salzberg S.L."/>
            <person name="Sandelin A."/>
            <person name="Schneider C."/>
            <person name="Schoenbach C."/>
            <person name="Sekiguchi K."/>
            <person name="Semple C.A."/>
            <person name="Seno S."/>
            <person name="Sessa L."/>
            <person name="Sheng Y."/>
            <person name="Shibata Y."/>
            <person name="Shimada H."/>
            <person name="Shimada K."/>
            <person name="Silva D."/>
            <person name="Sinclair B."/>
            <person name="Sperling S."/>
            <person name="Stupka E."/>
            <person name="Sugiura K."/>
            <person name="Sultana R."/>
            <person name="Takenaka Y."/>
            <person name="Taki K."/>
            <person name="Tammoja K."/>
            <person name="Tan S.L."/>
            <person name="Tang S."/>
            <person name="Taylor M.S."/>
            <person name="Tegner J."/>
            <person name="Teichmann S.A."/>
            <person name="Ueda H.R."/>
            <person name="van Nimwegen E."/>
            <person name="Verardo R."/>
            <person name="Wei C.L."/>
            <person name="Yagi K."/>
            <person name="Yamanishi H."/>
            <person name="Zabarovsky E."/>
            <person name="Zhu S."/>
            <person name="Zimmer A."/>
            <person name="Hide W."/>
            <person name="Bult C."/>
            <person name="Grimmond S.M."/>
            <person name="Teasdale R.D."/>
            <person name="Liu E.T."/>
            <person name="Brusic V."/>
            <person name="Quackenbush J."/>
            <person name="Wahlestedt C."/>
            <person name="Mattick J.S."/>
            <person name="Hume D.A."/>
            <person name="Kai C."/>
            <person name="Sasaki D."/>
            <person name="Tomaru Y."/>
            <person name="Fukuda S."/>
            <person name="Kanamori-Katayama M."/>
            <person name="Suzuki M."/>
            <person name="Aoki J."/>
            <person name="Arakawa T."/>
            <person name="Iida J."/>
            <person name="Imamura K."/>
            <person name="Itoh M."/>
            <person name="Kato T."/>
            <person name="Kawaji H."/>
            <person name="Kawagashira N."/>
            <person name="Kawashima T."/>
            <person name="Kojima M."/>
            <person name="Kondo S."/>
            <person name="Konno H."/>
            <person name="Nakano K."/>
            <person name="Ninomiya N."/>
            <person name="Nishio T."/>
            <person name="Okada M."/>
            <person name="Plessy C."/>
            <person name="Shibata K."/>
            <person name="Shiraki T."/>
            <person name="Suzuki S."/>
            <person name="Tagami M."/>
            <person name="Waki K."/>
            <person name="Watahiki A."/>
            <person name="Okamura-Oho Y."/>
            <person name="Suzuki H."/>
            <person name="Kawai J."/>
            <person name="Hayashizaki Y."/>
        </authorList>
    </citation>
    <scope>NUCLEOTIDE SEQUENCE [LARGE SCALE MRNA]</scope>
    <source>
        <strain>C57BL/6J</strain>
        <tissue>Cerebellum</tissue>
        <tissue>Spleen</tissue>
    </source>
</reference>
<reference key="2">
    <citation type="journal article" date="2004" name="Genome Res.">
        <title>The status, quality, and expansion of the NIH full-length cDNA project: the Mammalian Gene Collection (MGC).</title>
        <authorList>
            <consortium name="The MGC Project Team"/>
        </authorList>
    </citation>
    <scope>NUCLEOTIDE SEQUENCE [LARGE SCALE MRNA]</scope>
    <source>
        <strain>FVB/N</strain>
        <tissue>Mammary tumor</tissue>
    </source>
</reference>